<feature type="chain" id="PRO_0000179466" description="Trigger factor">
    <location>
        <begin position="1"/>
        <end position="430"/>
    </location>
</feature>
<feature type="domain" description="PPIase FKBP-type" evidence="1">
    <location>
        <begin position="157"/>
        <end position="242"/>
    </location>
</feature>
<proteinExistence type="inferred from homology"/>
<protein>
    <recommendedName>
        <fullName evidence="1">Trigger factor</fullName>
        <shortName evidence="1">TF</shortName>
        <ecNumber evidence="1">5.2.1.8</ecNumber>
    </recommendedName>
    <alternativeName>
        <fullName evidence="1">PPIase</fullName>
    </alternativeName>
</protein>
<reference key="1">
    <citation type="journal article" date="2002" name="Nature">
        <title>Comparison of the genomes of two Xanthomonas pathogens with differing host specificities.</title>
        <authorList>
            <person name="da Silva A.C.R."/>
            <person name="Ferro J.A."/>
            <person name="Reinach F.C."/>
            <person name="Farah C.S."/>
            <person name="Furlan L.R."/>
            <person name="Quaggio R.B."/>
            <person name="Monteiro-Vitorello C.B."/>
            <person name="Van Sluys M.A."/>
            <person name="Almeida N.F. Jr."/>
            <person name="Alves L.M.C."/>
            <person name="do Amaral A.M."/>
            <person name="Bertolini M.C."/>
            <person name="Camargo L.E.A."/>
            <person name="Camarotte G."/>
            <person name="Cannavan F."/>
            <person name="Cardozo J."/>
            <person name="Chambergo F."/>
            <person name="Ciapina L.P."/>
            <person name="Cicarelli R.M.B."/>
            <person name="Coutinho L.L."/>
            <person name="Cursino-Santos J.R."/>
            <person name="El-Dorry H."/>
            <person name="Faria J.B."/>
            <person name="Ferreira A.J.S."/>
            <person name="Ferreira R.C.C."/>
            <person name="Ferro M.I.T."/>
            <person name="Formighieri E.F."/>
            <person name="Franco M.C."/>
            <person name="Greggio C.C."/>
            <person name="Gruber A."/>
            <person name="Katsuyama A.M."/>
            <person name="Kishi L.T."/>
            <person name="Leite R.P."/>
            <person name="Lemos E.G.M."/>
            <person name="Lemos M.V.F."/>
            <person name="Locali E.C."/>
            <person name="Machado M.A."/>
            <person name="Madeira A.M.B.N."/>
            <person name="Martinez-Rossi N.M."/>
            <person name="Martins E.C."/>
            <person name="Meidanis J."/>
            <person name="Menck C.F.M."/>
            <person name="Miyaki C.Y."/>
            <person name="Moon D.H."/>
            <person name="Moreira L.M."/>
            <person name="Novo M.T.M."/>
            <person name="Okura V.K."/>
            <person name="Oliveira M.C."/>
            <person name="Oliveira V.R."/>
            <person name="Pereira H.A."/>
            <person name="Rossi A."/>
            <person name="Sena J.A.D."/>
            <person name="Silva C."/>
            <person name="de Souza R.F."/>
            <person name="Spinola L.A.F."/>
            <person name="Takita M.A."/>
            <person name="Tamura R.E."/>
            <person name="Teixeira E.C."/>
            <person name="Tezza R.I.D."/>
            <person name="Trindade dos Santos M."/>
            <person name="Truffi D."/>
            <person name="Tsai S.M."/>
            <person name="White F.F."/>
            <person name="Setubal J.C."/>
            <person name="Kitajima J.P."/>
        </authorList>
    </citation>
    <scope>NUCLEOTIDE SEQUENCE [LARGE SCALE GENOMIC DNA]</scope>
    <source>
        <strain>ATCC 33913 / DSM 3586 / NCPPB 528 / LMG 568 / P 25</strain>
    </source>
</reference>
<sequence length="430" mass="48214">MQASIESTGNLERRLTFTLPQERLETHVGGRLRELARTTRIKGFRPGKVPTKVIEQRFGQQVRAEAMEGLLRETFDSAVREHSLRLAGNPRIDQGESDFDFVATFEVVPDFGDIDVTNLSVVRHTAEVTDADIDQMIENLRLQRRTWNPVERGAQVGDLVALETWSQAGNERLPAEGVETGSSVLGSGVMFDQIEKGLEGLSKGEDKALSIDFPADWRVPQLAGKTVQVHVKAVEVSEPVLPEVNKEFIKSFGVKSGDAEQFRADIRTNLERELKGALMNRLRREVGEQLIAAYAHVEMPPRLVENEAGSMLAQQVDQMRRSGRNPGEIPADAHQGFMDAAAKRVLVGLLVGEVARRNELRLESKRVSETLRLIASTYEEPEQVIEMYRNDPQLMSGLQSRVMEEQVIDWIAERAKHTEQSLSFQDAIRV</sequence>
<keyword id="KW-0131">Cell cycle</keyword>
<keyword id="KW-0132">Cell division</keyword>
<keyword id="KW-0143">Chaperone</keyword>
<keyword id="KW-0963">Cytoplasm</keyword>
<keyword id="KW-0413">Isomerase</keyword>
<keyword id="KW-1185">Reference proteome</keyword>
<keyword id="KW-0697">Rotamase</keyword>
<evidence type="ECO:0000255" key="1">
    <source>
        <dbReference type="HAMAP-Rule" id="MF_00303"/>
    </source>
</evidence>
<organism>
    <name type="scientific">Xanthomonas campestris pv. campestris (strain ATCC 33913 / DSM 3586 / NCPPB 528 / LMG 568 / P 25)</name>
    <dbReference type="NCBI Taxonomy" id="190485"/>
    <lineage>
        <taxon>Bacteria</taxon>
        <taxon>Pseudomonadati</taxon>
        <taxon>Pseudomonadota</taxon>
        <taxon>Gammaproteobacteria</taxon>
        <taxon>Lysobacterales</taxon>
        <taxon>Lysobacteraceae</taxon>
        <taxon>Xanthomonas</taxon>
    </lineage>
</organism>
<accession>Q8PBY7</accession>
<comment type="function">
    <text evidence="1">Involved in protein export. Acts as a chaperone by maintaining the newly synthesized protein in an open conformation. Functions as a peptidyl-prolyl cis-trans isomerase.</text>
</comment>
<comment type="catalytic activity">
    <reaction evidence="1">
        <text>[protein]-peptidylproline (omega=180) = [protein]-peptidylproline (omega=0)</text>
        <dbReference type="Rhea" id="RHEA:16237"/>
        <dbReference type="Rhea" id="RHEA-COMP:10747"/>
        <dbReference type="Rhea" id="RHEA-COMP:10748"/>
        <dbReference type="ChEBI" id="CHEBI:83833"/>
        <dbReference type="ChEBI" id="CHEBI:83834"/>
        <dbReference type="EC" id="5.2.1.8"/>
    </reaction>
</comment>
<comment type="subcellular location">
    <subcellularLocation>
        <location>Cytoplasm</location>
    </subcellularLocation>
    <text evidence="1">About half TF is bound to the ribosome near the polypeptide exit tunnel while the other half is free in the cytoplasm.</text>
</comment>
<comment type="domain">
    <text evidence="1">Consists of 3 domains; the N-terminus binds the ribosome, the middle domain has PPIase activity, while the C-terminus has intrinsic chaperone activity on its own.</text>
</comment>
<comment type="similarity">
    <text evidence="1">Belongs to the FKBP-type PPIase family. Tig subfamily.</text>
</comment>
<name>TIG_XANCP</name>
<gene>
    <name evidence="1" type="primary">tig</name>
    <name type="ordered locus">XCC0974</name>
</gene>
<dbReference type="EC" id="5.2.1.8" evidence="1"/>
<dbReference type="EMBL" id="AE008922">
    <property type="protein sequence ID" value="AAM40279.1"/>
    <property type="molecule type" value="Genomic_DNA"/>
</dbReference>
<dbReference type="RefSeq" id="NP_636355.1">
    <property type="nucleotide sequence ID" value="NC_003902.1"/>
</dbReference>
<dbReference type="RefSeq" id="WP_011036183.1">
    <property type="nucleotide sequence ID" value="NC_003902.1"/>
</dbReference>
<dbReference type="SMR" id="Q8PBY7"/>
<dbReference type="STRING" id="190485.XCC0974"/>
<dbReference type="EnsemblBacteria" id="AAM40279">
    <property type="protein sequence ID" value="AAM40279"/>
    <property type="gene ID" value="XCC0974"/>
</dbReference>
<dbReference type="KEGG" id="xcc:XCC0974"/>
<dbReference type="PATRIC" id="fig|190485.4.peg.1044"/>
<dbReference type="eggNOG" id="COG0544">
    <property type="taxonomic scope" value="Bacteria"/>
</dbReference>
<dbReference type="HOGENOM" id="CLU_033058_2_0_6"/>
<dbReference type="OrthoDB" id="9767721at2"/>
<dbReference type="Proteomes" id="UP000001010">
    <property type="component" value="Chromosome"/>
</dbReference>
<dbReference type="GO" id="GO:0005737">
    <property type="term" value="C:cytoplasm"/>
    <property type="evidence" value="ECO:0007669"/>
    <property type="project" value="UniProtKB-SubCell"/>
</dbReference>
<dbReference type="GO" id="GO:0003755">
    <property type="term" value="F:peptidyl-prolyl cis-trans isomerase activity"/>
    <property type="evidence" value="ECO:0000318"/>
    <property type="project" value="GO_Central"/>
</dbReference>
<dbReference type="GO" id="GO:0044183">
    <property type="term" value="F:protein folding chaperone"/>
    <property type="evidence" value="ECO:0000318"/>
    <property type="project" value="GO_Central"/>
</dbReference>
<dbReference type="GO" id="GO:0043022">
    <property type="term" value="F:ribosome binding"/>
    <property type="evidence" value="ECO:0000318"/>
    <property type="project" value="GO_Central"/>
</dbReference>
<dbReference type="GO" id="GO:0051083">
    <property type="term" value="P:'de novo' cotranslational protein folding"/>
    <property type="evidence" value="ECO:0000318"/>
    <property type="project" value="GO_Central"/>
</dbReference>
<dbReference type="GO" id="GO:0051301">
    <property type="term" value="P:cell division"/>
    <property type="evidence" value="ECO:0007669"/>
    <property type="project" value="UniProtKB-KW"/>
</dbReference>
<dbReference type="GO" id="GO:0061077">
    <property type="term" value="P:chaperone-mediated protein folding"/>
    <property type="evidence" value="ECO:0000318"/>
    <property type="project" value="GO_Central"/>
</dbReference>
<dbReference type="GO" id="GO:0015031">
    <property type="term" value="P:protein transport"/>
    <property type="evidence" value="ECO:0007669"/>
    <property type="project" value="UniProtKB-UniRule"/>
</dbReference>
<dbReference type="GO" id="GO:0043335">
    <property type="term" value="P:protein unfolding"/>
    <property type="evidence" value="ECO:0000318"/>
    <property type="project" value="GO_Central"/>
</dbReference>
<dbReference type="Gene3D" id="3.10.50.40">
    <property type="match status" value="1"/>
</dbReference>
<dbReference type="Gene3D" id="3.30.70.1050">
    <property type="entry name" value="Trigger factor ribosome-binding domain"/>
    <property type="match status" value="1"/>
</dbReference>
<dbReference type="Gene3D" id="1.10.3120.10">
    <property type="entry name" value="Trigger factor, C-terminal domain"/>
    <property type="match status" value="1"/>
</dbReference>
<dbReference type="HAMAP" id="MF_00303">
    <property type="entry name" value="Trigger_factor_Tig"/>
    <property type="match status" value="1"/>
</dbReference>
<dbReference type="InterPro" id="IPR046357">
    <property type="entry name" value="PPIase_dom_sf"/>
</dbReference>
<dbReference type="InterPro" id="IPR005215">
    <property type="entry name" value="Trig_fac"/>
</dbReference>
<dbReference type="InterPro" id="IPR008880">
    <property type="entry name" value="Trigger_fac_C"/>
</dbReference>
<dbReference type="InterPro" id="IPR037041">
    <property type="entry name" value="Trigger_fac_C_sf"/>
</dbReference>
<dbReference type="InterPro" id="IPR008881">
    <property type="entry name" value="Trigger_fac_ribosome-bd_bac"/>
</dbReference>
<dbReference type="InterPro" id="IPR036611">
    <property type="entry name" value="Trigger_fac_ribosome-bd_sf"/>
</dbReference>
<dbReference type="InterPro" id="IPR027304">
    <property type="entry name" value="Trigger_fact/SurA_dom_sf"/>
</dbReference>
<dbReference type="NCBIfam" id="TIGR00115">
    <property type="entry name" value="tig"/>
    <property type="match status" value="1"/>
</dbReference>
<dbReference type="PANTHER" id="PTHR30560">
    <property type="entry name" value="TRIGGER FACTOR CHAPERONE AND PEPTIDYL-PROLYL CIS/TRANS ISOMERASE"/>
    <property type="match status" value="1"/>
</dbReference>
<dbReference type="PANTHER" id="PTHR30560:SF3">
    <property type="entry name" value="TRIGGER FACTOR-LIKE PROTEIN TIG, CHLOROPLASTIC"/>
    <property type="match status" value="1"/>
</dbReference>
<dbReference type="Pfam" id="PF05698">
    <property type="entry name" value="Trigger_C"/>
    <property type="match status" value="1"/>
</dbReference>
<dbReference type="Pfam" id="PF05697">
    <property type="entry name" value="Trigger_N"/>
    <property type="match status" value="1"/>
</dbReference>
<dbReference type="PIRSF" id="PIRSF003095">
    <property type="entry name" value="Trigger_factor"/>
    <property type="match status" value="1"/>
</dbReference>
<dbReference type="SUPFAM" id="SSF54534">
    <property type="entry name" value="FKBP-like"/>
    <property type="match status" value="1"/>
</dbReference>
<dbReference type="SUPFAM" id="SSF109998">
    <property type="entry name" value="Triger factor/SurA peptide-binding domain-like"/>
    <property type="match status" value="1"/>
</dbReference>
<dbReference type="SUPFAM" id="SSF102735">
    <property type="entry name" value="Trigger factor ribosome-binding domain"/>
    <property type="match status" value="1"/>
</dbReference>